<proteinExistence type="evidence at protein level"/>
<keyword id="KW-0053">Apoptosis</keyword>
<keyword id="KW-1035">Host cytoplasm</keyword>
<keyword id="KW-1043">Host membrane</keyword>
<keyword id="KW-1045">Host mitochondrion</keyword>
<keyword id="KW-1046">Host mitochondrion inner membrane</keyword>
<keyword id="KW-1048">Host nucleus</keyword>
<keyword id="KW-0945">Host-virus interaction</keyword>
<keyword id="KW-1090">Inhibition of host innate immune response by virus</keyword>
<keyword id="KW-1097">Inhibition of host MAVS by virus</keyword>
<keyword id="KW-1113">Inhibition of host RLR pathway by virus</keyword>
<keyword id="KW-0472">Membrane</keyword>
<keyword id="KW-1119">Modulation of host cell apoptosis by virus</keyword>
<keyword id="KW-0899">Viral immunoevasion</keyword>
<accession>P0C0U0</accession>
<gene>
    <name evidence="1" type="primary">PB1</name>
</gene>
<sequence>MEQEQDTPWTQSTEHINIQKKGGGQQTQRPEHPNSTLLMDHYLKITSRAGMHKQIVYWKQWLSLKNPTQDSLKTRVLKRWKLSSKREWIS</sequence>
<reference key="1">
    <citation type="journal article" date="1998" name="Science">
        <title>Characterization of an avian influenza A (H5N1) virus isolated from a child with a fatal respiratory illness.</title>
        <authorList>
            <person name="Subbarao K."/>
            <person name="Klimov A."/>
            <person name="Katz J."/>
            <person name="Regnery H."/>
            <person name="Lim W."/>
            <person name="Hall H."/>
            <person name="Perdue M."/>
            <person name="Swayne D."/>
            <person name="Bender C."/>
            <person name="Huang J."/>
            <person name="Hemphill M."/>
            <person name="Rowe T."/>
            <person name="Shaw M."/>
            <person name="Xu X."/>
            <person name="Fukuda K."/>
            <person name="Cox N."/>
        </authorList>
    </citation>
    <scope>NUCLEOTIDE SEQUENCE [GENOMIC RNA]</scope>
</reference>
<reference key="2">
    <citation type="journal article" date="2007" name="PLoS Pathog.">
        <title>A single mutation in the PB1-F2 of H5N1 (HK/97) and 1918 Influenza A viruses contributes to increased virulence.</title>
        <authorList>
            <person name="Conenello G.M."/>
            <person name="Zamarin D."/>
            <person name="Perrone L.A."/>
            <person name="Tumpey T."/>
            <person name="Palese P."/>
        </authorList>
    </citation>
    <scope>MUTAGENESIS OF ASN-66</scope>
</reference>
<name>PB1F2_I97A1</name>
<feature type="chain" id="PRO_0000078742" description="Protein PB1-F2">
    <location>
        <begin position="1"/>
        <end position="90"/>
    </location>
</feature>
<feature type="region of interest" description="Disordered" evidence="2">
    <location>
        <begin position="1"/>
        <end position="34"/>
    </location>
</feature>
<feature type="region of interest" description="Mitochondrial targeting sequence" evidence="1">
    <location>
        <begin position="65"/>
        <end position="87"/>
    </location>
</feature>
<feature type="compositionally biased region" description="Polar residues" evidence="2">
    <location>
        <begin position="1"/>
        <end position="16"/>
    </location>
</feature>
<feature type="site" description="Low pathogenicity" evidence="1">
    <location>
        <position position="66"/>
    </location>
</feature>
<feature type="mutagenesis site" description="Increased pathogenicity, and 100-fold increase of virus replication in mice." evidence="3">
    <original>N</original>
    <variation>S</variation>
    <location>
        <position position="66"/>
    </location>
</feature>
<evidence type="ECO:0000255" key="1">
    <source>
        <dbReference type="HAMAP-Rule" id="MF_04064"/>
    </source>
</evidence>
<evidence type="ECO:0000256" key="2">
    <source>
        <dbReference type="SAM" id="MobiDB-lite"/>
    </source>
</evidence>
<evidence type="ECO:0000269" key="3">
    <source>
    </source>
</evidence>
<protein>
    <recommendedName>
        <fullName evidence="1">Protein PB1-F2</fullName>
    </recommendedName>
</protein>
<dbReference type="EMBL" id="AF036362">
    <property type="status" value="NOT_ANNOTATED_CDS"/>
    <property type="molecule type" value="Genomic_RNA"/>
</dbReference>
<dbReference type="SMR" id="P0C0U0"/>
<dbReference type="Proteomes" id="UP000008587">
    <property type="component" value="Genome"/>
</dbReference>
<dbReference type="GO" id="GO:0044164">
    <property type="term" value="C:host cell cytosol"/>
    <property type="evidence" value="ECO:0007669"/>
    <property type="project" value="UniProtKB-SubCell"/>
</dbReference>
<dbReference type="GO" id="GO:0044192">
    <property type="term" value="C:host cell mitochondrial inner membrane"/>
    <property type="evidence" value="ECO:0007669"/>
    <property type="project" value="UniProtKB-SubCell"/>
</dbReference>
<dbReference type="GO" id="GO:0042025">
    <property type="term" value="C:host cell nucleus"/>
    <property type="evidence" value="ECO:0007669"/>
    <property type="project" value="UniProtKB-SubCell"/>
</dbReference>
<dbReference type="GO" id="GO:0016020">
    <property type="term" value="C:membrane"/>
    <property type="evidence" value="ECO:0007669"/>
    <property type="project" value="UniProtKB-UniRule"/>
</dbReference>
<dbReference type="GO" id="GO:0052150">
    <property type="term" value="P:symbiont-mediated perturbation of host apoptosis"/>
    <property type="evidence" value="ECO:0007669"/>
    <property type="project" value="UniProtKB-KW"/>
</dbReference>
<dbReference type="GO" id="GO:0039545">
    <property type="term" value="P:symbiont-mediated suppression of host cytoplasmic pattern recognition receptor signaling pathway via inhibition of MAVS activity"/>
    <property type="evidence" value="ECO:0007669"/>
    <property type="project" value="UniProtKB-KW"/>
</dbReference>
<dbReference type="HAMAP" id="MF_04064">
    <property type="entry name" value="INFV_PB1F2"/>
    <property type="match status" value="1"/>
</dbReference>
<dbReference type="InterPro" id="IPR021045">
    <property type="entry name" value="Flu_proapoptotic_PB1-F2"/>
</dbReference>
<dbReference type="Pfam" id="PF11986">
    <property type="entry name" value="PB1-F2"/>
    <property type="match status" value="1"/>
</dbReference>
<organism>
    <name type="scientific">Influenza A virus (strain A/Hong Kong/156/1997 H5N1 genotype Gs/Gd)</name>
    <dbReference type="NCBI Taxonomy" id="130763"/>
    <lineage>
        <taxon>Viruses</taxon>
        <taxon>Riboviria</taxon>
        <taxon>Orthornavirae</taxon>
        <taxon>Negarnaviricota</taxon>
        <taxon>Polyploviricotina</taxon>
        <taxon>Insthoviricetes</taxon>
        <taxon>Articulavirales</taxon>
        <taxon>Orthomyxoviridae</taxon>
        <taxon>Alphainfluenzavirus</taxon>
        <taxon>Alphainfluenzavirus influenzae</taxon>
        <taxon>Influenza A virus</taxon>
    </lineage>
</organism>
<comment type="function">
    <text evidence="1">Plays an important role in promoting lung pathology in both primary viral infection and secondary bacterial infection. Promotes alteration of mitochondrial morphology, dissipation of mitochondrial membrane potential, and cell death. Alternatively, inhibits the production of interferon in the infected cell at the level of host mitochondrial antiviral signaling MAVS. Its level of expression differs greatly depending on which cell type is infected, in a manner that is independent of the levels of expression of other viral proteins. Monocytic cells are more affected than epithelial cells. Seems to disable virus-infected monocytes or other host innate immune cells. During early stage of infection, predisposes the mitochondria to permeability transition through interaction with host SLC25A6/ANT3 and VDAC1. These proteins participate in the formation of the permeability transition pore complex (PTPC) responsible of the release of mitochondrial products that triggers apoptosis.</text>
</comment>
<comment type="subunit">
    <text evidence="1">Oligomer. Interacts with human SLC25A6/ANT3 and VDAC1. Interacts with host MAVS.</text>
</comment>
<comment type="subcellular location">
    <subcellularLocation>
        <location evidence="1">Host mitochondrion inner membrane</location>
    </subcellularLocation>
    <subcellularLocation>
        <location evidence="1">Host nucleus</location>
    </subcellularLocation>
    <subcellularLocation>
        <location evidence="1">Host cytoplasm</location>
        <location evidence="1">Host cytosol</location>
    </subcellularLocation>
    <text evidence="1">Inner mitochondrial membrane in most cells types. Otherwise is detected in the nucleus and cytosol.</text>
</comment>
<comment type="miscellaneous">
    <text>Is not encoded in all strains, and seems to be dispensable for replication.</text>
</comment>
<comment type="similarity">
    <text evidence="1">Belongs to the influenza viruses PB1-F2 family.</text>
</comment>
<organismHost>
    <name type="scientific">Aves</name>
    <dbReference type="NCBI Taxonomy" id="8782"/>
</organismHost>
<organismHost>
    <name type="scientific">Felis catus</name>
    <name type="common">Cat</name>
    <name type="synonym">Felis silvestris catus</name>
    <dbReference type="NCBI Taxonomy" id="9685"/>
</organismHost>
<organismHost>
    <name type="scientific">Homo sapiens</name>
    <name type="common">Human</name>
    <dbReference type="NCBI Taxonomy" id="9606"/>
</organismHost>
<organismHost>
    <name type="scientific">Panthera pardus</name>
    <name type="common">Leopard</name>
    <name type="synonym">Felis pardus</name>
    <dbReference type="NCBI Taxonomy" id="9691"/>
</organismHost>
<organismHost>
    <name type="scientific">Panthera tigris</name>
    <name type="common">Tiger</name>
    <dbReference type="NCBI Taxonomy" id="9694"/>
</organismHost>
<organismHost>
    <name type="scientific">Sus scrofa</name>
    <name type="common">Pig</name>
    <dbReference type="NCBI Taxonomy" id="9823"/>
</organismHost>